<feature type="chain" id="PRO_0000419420" description="Protein PA-X">
    <location>
        <begin position="1"/>
        <end position="252"/>
    </location>
</feature>
<feature type="active site" evidence="2">
    <location>
        <position position="80"/>
    </location>
</feature>
<feature type="active site" evidence="2">
    <location>
        <position position="108"/>
    </location>
</feature>
<feature type="site" description="Important for efficient shutoff activity and nuclear localization" evidence="4">
    <location>
        <position position="195"/>
    </location>
</feature>
<feature type="site" description="Important for efficient shutoff activity and nuclear localization" evidence="4">
    <location>
        <position position="198"/>
    </location>
</feature>
<feature type="site" description="Important for efficient shutoff activity and nuclear localization" evidence="4">
    <location>
        <position position="199"/>
    </location>
</feature>
<feature type="site" description="Important for efficient shutoff activity" evidence="3">
    <location>
        <position position="202"/>
    </location>
</feature>
<feature type="site" description="Important for efficient shutoff activity" evidence="3">
    <location>
        <position position="203"/>
    </location>
</feature>
<feature type="site" description="Important for efficient shutoff activity" evidence="3">
    <location>
        <position position="206"/>
    </location>
</feature>
<dbReference type="EMBL" id="M26084">
    <property type="status" value="NOT_ANNOTATED_CDS"/>
    <property type="molecule type" value="Genomic_RNA"/>
</dbReference>
<dbReference type="EMBL" id="CY005911">
    <property type="status" value="NOT_ANNOTATED_CDS"/>
    <property type="molecule type" value="Genomic_RNA"/>
</dbReference>
<dbReference type="SMR" id="P0DJV7"/>
<dbReference type="Proteomes" id="UP000008579">
    <property type="component" value="Genome"/>
</dbReference>
<dbReference type="GO" id="GO:0003723">
    <property type="term" value="F:RNA binding"/>
    <property type="evidence" value="ECO:0007669"/>
    <property type="project" value="InterPro"/>
</dbReference>
<dbReference type="GO" id="GO:0039694">
    <property type="term" value="P:viral RNA genome replication"/>
    <property type="evidence" value="ECO:0007669"/>
    <property type="project" value="InterPro"/>
</dbReference>
<dbReference type="GO" id="GO:0075523">
    <property type="term" value="P:viral translational frameshifting"/>
    <property type="evidence" value="ECO:0007669"/>
    <property type="project" value="UniProtKB-KW"/>
</dbReference>
<dbReference type="FunFam" id="3.40.91.90:FF:000001">
    <property type="entry name" value="Polymerase acidic protein"/>
    <property type="match status" value="1"/>
</dbReference>
<dbReference type="Gene3D" id="3.40.91.90">
    <property type="entry name" value="Influenza RNA-dependent RNA polymerase subunit PA, endonuclease domain"/>
    <property type="match status" value="1"/>
</dbReference>
<dbReference type="InterPro" id="IPR001009">
    <property type="entry name" value="PA/PA-X"/>
</dbReference>
<dbReference type="InterPro" id="IPR038372">
    <property type="entry name" value="PA/PA-X_sf"/>
</dbReference>
<dbReference type="Pfam" id="PF00603">
    <property type="entry name" value="Flu_PA"/>
    <property type="match status" value="1"/>
</dbReference>
<name>PAX_I80A8</name>
<organism>
    <name type="scientific">Influenza A virus (strain A/Turkey/Minnesota/833/1980 H4N2)</name>
    <dbReference type="NCBI Taxonomy" id="383603"/>
    <lineage>
        <taxon>Viruses</taxon>
        <taxon>Riboviria</taxon>
        <taxon>Orthornavirae</taxon>
        <taxon>Negarnaviricota</taxon>
        <taxon>Polyploviricotina</taxon>
        <taxon>Insthoviricetes</taxon>
        <taxon>Articulavirales</taxon>
        <taxon>Orthomyxoviridae</taxon>
        <taxon>Alphainfluenzavirus</taxon>
        <taxon>Alphainfluenzavirus influenzae</taxon>
        <taxon>Influenza A virus</taxon>
    </lineage>
</organism>
<reference key="1">
    <citation type="journal article" date="1989" name="Virology">
        <title>Evolutionary pathways of the PA genes of influenza A viruses.</title>
        <authorList>
            <person name="Okazaki K."/>
            <person name="Kawaoka Y."/>
            <person name="Webster R.G."/>
        </authorList>
    </citation>
    <scope>NUCLEOTIDE SEQUENCE [GENOMIC RNA]</scope>
</reference>
<reference key="2">
    <citation type="journal article" date="2006" name="Science">
        <title>Large-scale sequence analysis of avian influenza isolates.</title>
        <authorList>
            <person name="Obenauer J.C."/>
            <person name="Denson J."/>
            <person name="Mehta P.K."/>
            <person name="Su X."/>
            <person name="Mukatira S."/>
            <person name="Finkelstein D.B."/>
            <person name="Xu X."/>
            <person name="Wang J."/>
            <person name="Ma J."/>
            <person name="Fan Y."/>
            <person name="Rakestraw K.M."/>
            <person name="Webster R.G."/>
            <person name="Hoffmann E."/>
            <person name="Krauss S."/>
            <person name="Zheng J."/>
            <person name="Zhang Z."/>
            <person name="Naeve C.W."/>
        </authorList>
    </citation>
    <scope>NUCLEOTIDE SEQUENCE [GENOMIC RNA]</scope>
</reference>
<organismHost>
    <name type="scientific">Aves</name>
    <dbReference type="NCBI Taxonomy" id="8782"/>
</organismHost>
<sequence>MEDFVRQCFNPMIVELAEKAMKEYGEDPKIETNKFAAICTHLEVCFMYSDFHFIDERGESIIVESGDPNALLKHRFEIIEGRDRTMAWTVVNSICNTTGVEKPKFLPDLYDYKENRFIEIGVTRREVHIYYLEKANKIKSEKTHIHIFSFTGEEMATKADYTLDEESRARIKTRLFTIRQEMASRGLWDSFVSPKEAKRQLKKDLKSQEPCAGLPTKVSHRTSPALKTLEPMWMDSNRTAALRASFLKCQKK</sequence>
<protein>
    <recommendedName>
        <fullName>Protein PA-X</fullName>
    </recommendedName>
</protein>
<comment type="function">
    <text evidence="1 4">Plays a major role in the shutoff of the host protein expression by cleaving mRNAs probably via an endonuclease activity. This host shutoff allows the virus to escape from the host antiviral response (By similarity). Hijacks host RNA splicing machinery to selectively target host RNAs containing introns for destruction. This may explain the preferential degradation of RNAs that have undergone co- or post-transcriptional processing (By similarity).</text>
</comment>
<comment type="subcellular location">
    <subcellularLocation>
        <location evidence="4">Host cytoplasm</location>
    </subcellularLocation>
    <subcellularLocation>
        <location evidence="4">Host nucleus</location>
    </subcellularLocation>
</comment>
<comment type="alternative products">
    <event type="ribosomal frameshifting"/>
    <isoform>
        <id>P0DJV7-1</id>
        <name>PA-X</name>
        <sequence type="displayed"/>
    </isoform>
    <isoform>
        <id>P13178-1</id>
        <name>PA</name>
        <sequence type="external"/>
    </isoform>
</comment>
<comment type="domain">
    <text evidence="1 4">The probable endonuclease active site in the N-terminus and the basic amino acid cluster in the C-terminus are important for the shutoff activity. The C-terminus acts as a nuclear localization signal (By similarity). The C-terminus is recruited to host protein complexes involved in nuclear Pol II RNA processing (By similarity).</text>
</comment>
<comment type="similarity">
    <text evidence="5">Belongs to the influenza viruses PA-X family.</text>
</comment>
<gene>
    <name type="primary">PA</name>
</gene>
<proteinExistence type="inferred from homology"/>
<keyword id="KW-1132">Decay of host mRNAs by virus</keyword>
<keyword id="KW-1262">Eukaryotic host gene expression shutoff by virus</keyword>
<keyword id="KW-1035">Host cytoplasm</keyword>
<keyword id="KW-1190">Host gene expression shutoff by virus</keyword>
<keyword id="KW-1192">Host mRNA suppression by virus</keyword>
<keyword id="KW-1048">Host nucleus</keyword>
<keyword id="KW-0945">Host-virus interaction</keyword>
<keyword id="KW-0688">Ribosomal frameshifting</keyword>
<accession>P0DJV7</accession>
<evidence type="ECO:0000250" key="1">
    <source>
        <dbReference type="UniProtKB" id="P0CK64"/>
    </source>
</evidence>
<evidence type="ECO:0000250" key="2">
    <source>
        <dbReference type="UniProtKB" id="P0CK68"/>
    </source>
</evidence>
<evidence type="ECO:0000250" key="3">
    <source>
        <dbReference type="UniProtKB" id="P0DJW8"/>
    </source>
</evidence>
<evidence type="ECO:0000250" key="4">
    <source>
        <dbReference type="UniProtKB" id="P0DXO5"/>
    </source>
</evidence>
<evidence type="ECO:0000305" key="5"/>